<feature type="chain" id="PRO_1000201795" description="Octanoyltransferase">
    <location>
        <begin position="1"/>
        <end position="213"/>
    </location>
</feature>
<feature type="domain" description="BPL/LPL catalytic" evidence="2">
    <location>
        <begin position="32"/>
        <end position="207"/>
    </location>
</feature>
<feature type="active site" description="Acyl-thioester intermediate" evidence="1">
    <location>
        <position position="169"/>
    </location>
</feature>
<feature type="binding site" evidence="1">
    <location>
        <begin position="71"/>
        <end position="78"/>
    </location>
    <ligand>
        <name>substrate</name>
    </ligand>
</feature>
<feature type="binding site" evidence="1">
    <location>
        <begin position="138"/>
        <end position="140"/>
    </location>
    <ligand>
        <name>substrate</name>
    </ligand>
</feature>
<feature type="binding site" evidence="1">
    <location>
        <begin position="151"/>
        <end position="153"/>
    </location>
    <ligand>
        <name>substrate</name>
    </ligand>
</feature>
<feature type="site" description="Lowers pKa of active site Cys" evidence="1">
    <location>
        <position position="135"/>
    </location>
</feature>
<gene>
    <name evidence="1" type="primary">lipB</name>
    <name type="ordered locus">BWG_0501</name>
</gene>
<keyword id="KW-0012">Acyltransferase</keyword>
<keyword id="KW-0963">Cytoplasm</keyword>
<keyword id="KW-0808">Transferase</keyword>
<proteinExistence type="inferred from homology"/>
<name>LIPB_ECOBW</name>
<sequence length="213" mass="23883">MYQDKILVRQLGLQPYEPISQAMHEFTDTRDDSTLDEIWLVEHYPVFTQGQAGKAEHILMPGDIPVIQSDRGGQVTYHGPGQQVMYVLLNLKRRKLGVRELVTLLEQTVVNTLAELGIEAHPRADAPGVYVGEKKICSLGLRIRRGCSFHGLALNVNMDLSPFLRINPCGYAGMEMAKISQWKPEATTNNIAPRLLENILALLNNPDFEYITA</sequence>
<organism>
    <name type="scientific">Escherichia coli (strain K12 / MC4100 / BW2952)</name>
    <dbReference type="NCBI Taxonomy" id="595496"/>
    <lineage>
        <taxon>Bacteria</taxon>
        <taxon>Pseudomonadati</taxon>
        <taxon>Pseudomonadota</taxon>
        <taxon>Gammaproteobacteria</taxon>
        <taxon>Enterobacterales</taxon>
        <taxon>Enterobacteriaceae</taxon>
        <taxon>Escherichia</taxon>
    </lineage>
</organism>
<accession>C4ZWB7</accession>
<comment type="function">
    <text evidence="1">Catalyzes the transfer of endogenously produced octanoic acid from octanoyl-acyl-carrier-protein onto the lipoyl domains of lipoate-dependent enzymes. Lipoyl-ACP can also act as a substrate although octanoyl-ACP is likely to be the physiological substrate.</text>
</comment>
<comment type="catalytic activity">
    <reaction evidence="1">
        <text>octanoyl-[ACP] + L-lysyl-[protein] = N(6)-octanoyl-L-lysyl-[protein] + holo-[ACP] + H(+)</text>
        <dbReference type="Rhea" id="RHEA:17665"/>
        <dbReference type="Rhea" id="RHEA-COMP:9636"/>
        <dbReference type="Rhea" id="RHEA-COMP:9685"/>
        <dbReference type="Rhea" id="RHEA-COMP:9752"/>
        <dbReference type="Rhea" id="RHEA-COMP:9928"/>
        <dbReference type="ChEBI" id="CHEBI:15378"/>
        <dbReference type="ChEBI" id="CHEBI:29969"/>
        <dbReference type="ChEBI" id="CHEBI:64479"/>
        <dbReference type="ChEBI" id="CHEBI:78463"/>
        <dbReference type="ChEBI" id="CHEBI:78809"/>
        <dbReference type="EC" id="2.3.1.181"/>
    </reaction>
</comment>
<comment type="pathway">
    <text evidence="1">Protein modification; protein lipoylation via endogenous pathway; protein N(6)-(lipoyl)lysine from octanoyl-[acyl-carrier-protein]: step 1/2.</text>
</comment>
<comment type="subcellular location">
    <subcellularLocation>
        <location evidence="1">Cytoplasm</location>
    </subcellularLocation>
</comment>
<comment type="miscellaneous">
    <text evidence="1">In the reaction, the free carboxyl group of octanoic acid is attached via an amide linkage to the epsilon-amino group of a specific lysine residue of lipoyl domains of lipoate-dependent enzymes.</text>
</comment>
<comment type="similarity">
    <text evidence="1">Belongs to the LipB family.</text>
</comment>
<protein>
    <recommendedName>
        <fullName evidence="1">Octanoyltransferase</fullName>
        <ecNumber evidence="1">2.3.1.181</ecNumber>
    </recommendedName>
    <alternativeName>
        <fullName evidence="1">Lipoate-protein ligase B</fullName>
    </alternativeName>
    <alternativeName>
        <fullName evidence="1">Lipoyl/octanoyl transferase</fullName>
    </alternativeName>
    <alternativeName>
        <fullName evidence="1">Octanoyl-[acyl-carrier-protein]-protein N-octanoyltransferase</fullName>
    </alternativeName>
</protein>
<reference key="1">
    <citation type="journal article" date="2009" name="J. Bacteriol.">
        <title>Genomic sequencing reveals regulatory mutations and recombinational events in the widely used MC4100 lineage of Escherichia coli K-12.</title>
        <authorList>
            <person name="Ferenci T."/>
            <person name="Zhou Z."/>
            <person name="Betteridge T."/>
            <person name="Ren Y."/>
            <person name="Liu Y."/>
            <person name="Feng L."/>
            <person name="Reeves P.R."/>
            <person name="Wang L."/>
        </authorList>
    </citation>
    <scope>NUCLEOTIDE SEQUENCE [LARGE SCALE GENOMIC DNA]</scope>
    <source>
        <strain>K12 / MC4100 / BW2952</strain>
    </source>
</reference>
<evidence type="ECO:0000255" key="1">
    <source>
        <dbReference type="HAMAP-Rule" id="MF_00013"/>
    </source>
</evidence>
<evidence type="ECO:0000255" key="2">
    <source>
        <dbReference type="PROSITE-ProRule" id="PRU01067"/>
    </source>
</evidence>
<dbReference type="EC" id="2.3.1.181" evidence="1"/>
<dbReference type="EMBL" id="CP001396">
    <property type="protein sequence ID" value="ACR63668.1"/>
    <property type="molecule type" value="Genomic_DNA"/>
</dbReference>
<dbReference type="RefSeq" id="WP_000284027.1">
    <property type="nucleotide sequence ID" value="NC_012759.1"/>
</dbReference>
<dbReference type="SMR" id="C4ZWB7"/>
<dbReference type="GeneID" id="93776852"/>
<dbReference type="KEGG" id="ebw:BWG_0501"/>
<dbReference type="HOGENOM" id="CLU_035168_3_1_6"/>
<dbReference type="UniPathway" id="UPA00538">
    <property type="reaction ID" value="UER00592"/>
</dbReference>
<dbReference type="GO" id="GO:0005737">
    <property type="term" value="C:cytoplasm"/>
    <property type="evidence" value="ECO:0007669"/>
    <property type="project" value="UniProtKB-SubCell"/>
</dbReference>
<dbReference type="GO" id="GO:0033819">
    <property type="term" value="F:lipoyl(octanoyl) transferase activity"/>
    <property type="evidence" value="ECO:0007669"/>
    <property type="project" value="UniProtKB-EC"/>
</dbReference>
<dbReference type="GO" id="GO:0036211">
    <property type="term" value="P:protein modification process"/>
    <property type="evidence" value="ECO:0007669"/>
    <property type="project" value="InterPro"/>
</dbReference>
<dbReference type="CDD" id="cd16444">
    <property type="entry name" value="LipB"/>
    <property type="match status" value="1"/>
</dbReference>
<dbReference type="FunFam" id="3.30.930.10:FF:000020">
    <property type="entry name" value="Octanoyltransferase"/>
    <property type="match status" value="1"/>
</dbReference>
<dbReference type="Gene3D" id="3.30.930.10">
    <property type="entry name" value="Bira Bifunctional Protein, Domain 2"/>
    <property type="match status" value="1"/>
</dbReference>
<dbReference type="HAMAP" id="MF_00013">
    <property type="entry name" value="LipB"/>
    <property type="match status" value="1"/>
</dbReference>
<dbReference type="InterPro" id="IPR045864">
    <property type="entry name" value="aa-tRNA-synth_II/BPL/LPL"/>
</dbReference>
<dbReference type="InterPro" id="IPR004143">
    <property type="entry name" value="BPL_LPL_catalytic"/>
</dbReference>
<dbReference type="InterPro" id="IPR000544">
    <property type="entry name" value="Octanoyltransferase"/>
</dbReference>
<dbReference type="InterPro" id="IPR020605">
    <property type="entry name" value="Octanoyltransferase_CS"/>
</dbReference>
<dbReference type="NCBIfam" id="TIGR00214">
    <property type="entry name" value="lipB"/>
    <property type="match status" value="1"/>
</dbReference>
<dbReference type="NCBIfam" id="NF010922">
    <property type="entry name" value="PRK14342.1"/>
    <property type="match status" value="1"/>
</dbReference>
<dbReference type="PANTHER" id="PTHR10993:SF7">
    <property type="entry name" value="LIPOYLTRANSFERASE 2, MITOCHONDRIAL-RELATED"/>
    <property type="match status" value="1"/>
</dbReference>
<dbReference type="PANTHER" id="PTHR10993">
    <property type="entry name" value="OCTANOYLTRANSFERASE"/>
    <property type="match status" value="1"/>
</dbReference>
<dbReference type="Pfam" id="PF21948">
    <property type="entry name" value="LplA-B_cat"/>
    <property type="match status" value="1"/>
</dbReference>
<dbReference type="PIRSF" id="PIRSF016262">
    <property type="entry name" value="LPLase"/>
    <property type="match status" value="1"/>
</dbReference>
<dbReference type="SUPFAM" id="SSF55681">
    <property type="entry name" value="Class II aaRS and biotin synthetases"/>
    <property type="match status" value="1"/>
</dbReference>
<dbReference type="PROSITE" id="PS51733">
    <property type="entry name" value="BPL_LPL_CATALYTIC"/>
    <property type="match status" value="1"/>
</dbReference>
<dbReference type="PROSITE" id="PS01313">
    <property type="entry name" value="LIPB"/>
    <property type="match status" value="1"/>
</dbReference>